<feature type="chain" id="PRO_1000055917" description="Large ribosomal subunit protein bL17">
    <location>
        <begin position="1"/>
        <end position="128"/>
    </location>
</feature>
<proteinExistence type="inferred from homology"/>
<organism>
    <name type="scientific">Pseudomonas entomophila (strain L48)</name>
    <dbReference type="NCBI Taxonomy" id="384676"/>
    <lineage>
        <taxon>Bacteria</taxon>
        <taxon>Pseudomonadati</taxon>
        <taxon>Pseudomonadota</taxon>
        <taxon>Gammaproteobacteria</taxon>
        <taxon>Pseudomonadales</taxon>
        <taxon>Pseudomonadaceae</taxon>
        <taxon>Pseudomonas</taxon>
    </lineage>
</organism>
<sequence length="128" mass="14363">MRHRKSGRHLSRTSSHRKAMFQNMAVSLIEHELIKTTLPKAKELRRVAEPLITLAKEDSVANRRLAFDRTRSKSAVGKLFNDLGKRYATRQGGYLRILKCGFRAGDNAPMAYVELVDRPVGGAVEAAE</sequence>
<protein>
    <recommendedName>
        <fullName evidence="1">Large ribosomal subunit protein bL17</fullName>
    </recommendedName>
    <alternativeName>
        <fullName evidence="2">50S ribosomal protein L17</fullName>
    </alternativeName>
</protein>
<gene>
    <name evidence="1" type="primary">rplQ</name>
    <name type="ordered locus">PSEEN0515</name>
</gene>
<accession>Q1IFU0</accession>
<name>RL17_PSEE4</name>
<keyword id="KW-0687">Ribonucleoprotein</keyword>
<keyword id="KW-0689">Ribosomal protein</keyword>
<comment type="subunit">
    <text evidence="1">Part of the 50S ribosomal subunit. Contacts protein L32.</text>
</comment>
<comment type="similarity">
    <text evidence="1">Belongs to the bacterial ribosomal protein bL17 family.</text>
</comment>
<dbReference type="EMBL" id="CT573326">
    <property type="protein sequence ID" value="CAK13462.1"/>
    <property type="molecule type" value="Genomic_DNA"/>
</dbReference>
<dbReference type="RefSeq" id="WP_003255451.1">
    <property type="nucleotide sequence ID" value="NC_008027.1"/>
</dbReference>
<dbReference type="SMR" id="Q1IFU0"/>
<dbReference type="STRING" id="384676.PSEEN0515"/>
<dbReference type="GeneID" id="97166005"/>
<dbReference type="KEGG" id="pen:PSEEN0515"/>
<dbReference type="eggNOG" id="COG0203">
    <property type="taxonomic scope" value="Bacteria"/>
</dbReference>
<dbReference type="HOGENOM" id="CLU_074407_2_0_6"/>
<dbReference type="OrthoDB" id="9809073at2"/>
<dbReference type="Proteomes" id="UP000000658">
    <property type="component" value="Chromosome"/>
</dbReference>
<dbReference type="GO" id="GO:0022625">
    <property type="term" value="C:cytosolic large ribosomal subunit"/>
    <property type="evidence" value="ECO:0007669"/>
    <property type="project" value="TreeGrafter"/>
</dbReference>
<dbReference type="GO" id="GO:0003735">
    <property type="term" value="F:structural constituent of ribosome"/>
    <property type="evidence" value="ECO:0007669"/>
    <property type="project" value="InterPro"/>
</dbReference>
<dbReference type="GO" id="GO:0006412">
    <property type="term" value="P:translation"/>
    <property type="evidence" value="ECO:0007669"/>
    <property type="project" value="UniProtKB-UniRule"/>
</dbReference>
<dbReference type="FunFam" id="3.90.1030.10:FF:000001">
    <property type="entry name" value="50S ribosomal protein L17"/>
    <property type="match status" value="1"/>
</dbReference>
<dbReference type="Gene3D" id="3.90.1030.10">
    <property type="entry name" value="Ribosomal protein L17"/>
    <property type="match status" value="1"/>
</dbReference>
<dbReference type="HAMAP" id="MF_01368">
    <property type="entry name" value="Ribosomal_bL17"/>
    <property type="match status" value="1"/>
</dbReference>
<dbReference type="InterPro" id="IPR000456">
    <property type="entry name" value="Ribosomal_bL17"/>
</dbReference>
<dbReference type="InterPro" id="IPR047859">
    <property type="entry name" value="Ribosomal_bL17_CS"/>
</dbReference>
<dbReference type="InterPro" id="IPR036373">
    <property type="entry name" value="Ribosomal_bL17_sf"/>
</dbReference>
<dbReference type="NCBIfam" id="TIGR00059">
    <property type="entry name" value="L17"/>
    <property type="match status" value="1"/>
</dbReference>
<dbReference type="PANTHER" id="PTHR14413:SF16">
    <property type="entry name" value="LARGE RIBOSOMAL SUBUNIT PROTEIN BL17M"/>
    <property type="match status" value="1"/>
</dbReference>
<dbReference type="PANTHER" id="PTHR14413">
    <property type="entry name" value="RIBOSOMAL PROTEIN L17"/>
    <property type="match status" value="1"/>
</dbReference>
<dbReference type="Pfam" id="PF01196">
    <property type="entry name" value="Ribosomal_L17"/>
    <property type="match status" value="1"/>
</dbReference>
<dbReference type="SUPFAM" id="SSF64263">
    <property type="entry name" value="Prokaryotic ribosomal protein L17"/>
    <property type="match status" value="1"/>
</dbReference>
<dbReference type="PROSITE" id="PS01167">
    <property type="entry name" value="RIBOSOMAL_L17"/>
    <property type="match status" value="1"/>
</dbReference>
<evidence type="ECO:0000255" key="1">
    <source>
        <dbReference type="HAMAP-Rule" id="MF_01368"/>
    </source>
</evidence>
<evidence type="ECO:0000305" key="2"/>
<reference key="1">
    <citation type="journal article" date="2006" name="Nat. Biotechnol.">
        <title>Complete genome sequence of the entomopathogenic and metabolically versatile soil bacterium Pseudomonas entomophila.</title>
        <authorList>
            <person name="Vodovar N."/>
            <person name="Vallenet D."/>
            <person name="Cruveiller S."/>
            <person name="Rouy Z."/>
            <person name="Barbe V."/>
            <person name="Acosta C."/>
            <person name="Cattolico L."/>
            <person name="Jubin C."/>
            <person name="Lajus A."/>
            <person name="Segurens B."/>
            <person name="Vacherie B."/>
            <person name="Wincker P."/>
            <person name="Weissenbach J."/>
            <person name="Lemaitre B."/>
            <person name="Medigue C."/>
            <person name="Boccard F."/>
        </authorList>
    </citation>
    <scope>NUCLEOTIDE SEQUENCE [LARGE SCALE GENOMIC DNA]</scope>
    <source>
        <strain>L48</strain>
    </source>
</reference>